<dbReference type="EC" id="2.5.1.19" evidence="1"/>
<dbReference type="EMBL" id="CP000453">
    <property type="protein sequence ID" value="ABI56283.1"/>
    <property type="molecule type" value="Genomic_DNA"/>
</dbReference>
<dbReference type="RefSeq" id="WP_011628678.1">
    <property type="nucleotide sequence ID" value="NC_008340.1"/>
</dbReference>
<dbReference type="SMR" id="Q0AA54"/>
<dbReference type="KEGG" id="aeh:Mlg_0929"/>
<dbReference type="eggNOG" id="COG0128">
    <property type="taxonomic scope" value="Bacteria"/>
</dbReference>
<dbReference type="HOGENOM" id="CLU_024321_0_1_6"/>
<dbReference type="UniPathway" id="UPA00053">
    <property type="reaction ID" value="UER00089"/>
</dbReference>
<dbReference type="Proteomes" id="UP000001962">
    <property type="component" value="Chromosome"/>
</dbReference>
<dbReference type="GO" id="GO:0005737">
    <property type="term" value="C:cytoplasm"/>
    <property type="evidence" value="ECO:0007669"/>
    <property type="project" value="UniProtKB-SubCell"/>
</dbReference>
<dbReference type="GO" id="GO:0003866">
    <property type="term" value="F:3-phosphoshikimate 1-carboxyvinyltransferase activity"/>
    <property type="evidence" value="ECO:0007669"/>
    <property type="project" value="UniProtKB-UniRule"/>
</dbReference>
<dbReference type="GO" id="GO:0008652">
    <property type="term" value="P:amino acid biosynthetic process"/>
    <property type="evidence" value="ECO:0007669"/>
    <property type="project" value="UniProtKB-KW"/>
</dbReference>
<dbReference type="GO" id="GO:0009073">
    <property type="term" value="P:aromatic amino acid family biosynthetic process"/>
    <property type="evidence" value="ECO:0007669"/>
    <property type="project" value="UniProtKB-KW"/>
</dbReference>
<dbReference type="GO" id="GO:0009423">
    <property type="term" value="P:chorismate biosynthetic process"/>
    <property type="evidence" value="ECO:0007669"/>
    <property type="project" value="UniProtKB-UniRule"/>
</dbReference>
<dbReference type="CDD" id="cd01556">
    <property type="entry name" value="EPSP_synthase"/>
    <property type="match status" value="1"/>
</dbReference>
<dbReference type="FunFam" id="3.65.10.10:FF:000005">
    <property type="entry name" value="3-phosphoshikimate 1-carboxyvinyltransferase"/>
    <property type="match status" value="1"/>
</dbReference>
<dbReference type="FunFam" id="3.65.10.10:FF:000006">
    <property type="entry name" value="3-phosphoshikimate 1-carboxyvinyltransferase"/>
    <property type="match status" value="1"/>
</dbReference>
<dbReference type="Gene3D" id="3.65.10.10">
    <property type="entry name" value="Enolpyruvate transferase domain"/>
    <property type="match status" value="2"/>
</dbReference>
<dbReference type="HAMAP" id="MF_00210">
    <property type="entry name" value="EPSP_synth"/>
    <property type="match status" value="1"/>
</dbReference>
<dbReference type="InterPro" id="IPR001986">
    <property type="entry name" value="Enolpyruvate_Tfrase_dom"/>
</dbReference>
<dbReference type="InterPro" id="IPR036968">
    <property type="entry name" value="Enolpyruvate_Tfrase_sf"/>
</dbReference>
<dbReference type="InterPro" id="IPR006264">
    <property type="entry name" value="EPSP_synthase"/>
</dbReference>
<dbReference type="InterPro" id="IPR023193">
    <property type="entry name" value="EPSP_synthase_CS"/>
</dbReference>
<dbReference type="InterPro" id="IPR013792">
    <property type="entry name" value="RNA3'P_cycl/enolpyr_Trfase_a/b"/>
</dbReference>
<dbReference type="NCBIfam" id="TIGR01356">
    <property type="entry name" value="aroA"/>
    <property type="match status" value="1"/>
</dbReference>
<dbReference type="PANTHER" id="PTHR21090">
    <property type="entry name" value="AROM/DEHYDROQUINATE SYNTHASE"/>
    <property type="match status" value="1"/>
</dbReference>
<dbReference type="PANTHER" id="PTHR21090:SF5">
    <property type="entry name" value="PENTAFUNCTIONAL AROM POLYPEPTIDE"/>
    <property type="match status" value="1"/>
</dbReference>
<dbReference type="Pfam" id="PF00275">
    <property type="entry name" value="EPSP_synthase"/>
    <property type="match status" value="1"/>
</dbReference>
<dbReference type="PIRSF" id="PIRSF000505">
    <property type="entry name" value="EPSPS"/>
    <property type="match status" value="1"/>
</dbReference>
<dbReference type="SUPFAM" id="SSF55205">
    <property type="entry name" value="EPT/RTPC-like"/>
    <property type="match status" value="1"/>
</dbReference>
<dbReference type="PROSITE" id="PS00104">
    <property type="entry name" value="EPSP_SYNTHASE_1"/>
    <property type="match status" value="1"/>
</dbReference>
<dbReference type="PROSITE" id="PS00885">
    <property type="entry name" value="EPSP_SYNTHASE_2"/>
    <property type="match status" value="1"/>
</dbReference>
<accession>Q0AA54</accession>
<organism>
    <name type="scientific">Alkalilimnicola ehrlichii (strain ATCC BAA-1101 / DSM 17681 / MLHE-1)</name>
    <dbReference type="NCBI Taxonomy" id="187272"/>
    <lineage>
        <taxon>Bacteria</taxon>
        <taxon>Pseudomonadati</taxon>
        <taxon>Pseudomonadota</taxon>
        <taxon>Gammaproteobacteria</taxon>
        <taxon>Chromatiales</taxon>
        <taxon>Ectothiorhodospiraceae</taxon>
        <taxon>Alkalilimnicola</taxon>
    </lineage>
</organism>
<proteinExistence type="inferred from homology"/>
<evidence type="ECO:0000255" key="1">
    <source>
        <dbReference type="HAMAP-Rule" id="MF_00210"/>
    </source>
</evidence>
<gene>
    <name evidence="1" type="primary">aroA</name>
    <name type="ordered locus">Mlg_0929</name>
</gene>
<sequence length="446" mass="46758">MEFHVRPGGALRGRLRVPGDKSISHRAIMLGALAEGETRISGFLEGADALATLRTFRAMGVDIDGPHQGRVTVQGVGLHGLRAPDGPLDLGNSGTSMRLLCGLLAGQSFDTTLTGDASLSRRPMRRVIDPLTAMGAVIESGQGGTAPLTVRGGQPLHGIDYELPVASAQVKSALLLAGLYARGRTCVTEPAPTRDHTERMLAGFGYPVRQEGRRVCIEGGGRLRGGEIDVPADISSAAFFLVGASIAEGSDITLEHVGMNPTRTGVVDILRLMGADIQVQNEREVGGEPVADLRVRSAPLKGVAIPEALVPLAIDEFPVLFVAAACAEGETLLTGAEELRVKESDRIAVMAEGLTTLGVTAEPQPDGMRIVGQPDWGGGRVHSHGDHRIAMAFTMAATRAREPIEIEDCANVNTSFPGFVELAGDAGVALTRGDAEGRAQQRSDSP</sequence>
<comment type="function">
    <text evidence="1">Catalyzes the transfer of the enolpyruvyl moiety of phosphoenolpyruvate (PEP) to the 5-hydroxyl of shikimate-3-phosphate (S3P) to produce enolpyruvyl shikimate-3-phosphate and inorganic phosphate.</text>
</comment>
<comment type="catalytic activity">
    <reaction evidence="1">
        <text>3-phosphoshikimate + phosphoenolpyruvate = 5-O-(1-carboxyvinyl)-3-phosphoshikimate + phosphate</text>
        <dbReference type="Rhea" id="RHEA:21256"/>
        <dbReference type="ChEBI" id="CHEBI:43474"/>
        <dbReference type="ChEBI" id="CHEBI:57701"/>
        <dbReference type="ChEBI" id="CHEBI:58702"/>
        <dbReference type="ChEBI" id="CHEBI:145989"/>
        <dbReference type="EC" id="2.5.1.19"/>
    </reaction>
    <physiologicalReaction direction="left-to-right" evidence="1">
        <dbReference type="Rhea" id="RHEA:21257"/>
    </physiologicalReaction>
</comment>
<comment type="pathway">
    <text evidence="1">Metabolic intermediate biosynthesis; chorismate biosynthesis; chorismate from D-erythrose 4-phosphate and phosphoenolpyruvate: step 6/7.</text>
</comment>
<comment type="subunit">
    <text evidence="1">Monomer.</text>
</comment>
<comment type="subcellular location">
    <subcellularLocation>
        <location evidence="1">Cytoplasm</location>
    </subcellularLocation>
</comment>
<comment type="similarity">
    <text evidence="1">Belongs to the EPSP synthase family.</text>
</comment>
<name>AROA_ALKEH</name>
<keyword id="KW-0028">Amino-acid biosynthesis</keyword>
<keyword id="KW-0057">Aromatic amino acid biosynthesis</keyword>
<keyword id="KW-0963">Cytoplasm</keyword>
<keyword id="KW-1185">Reference proteome</keyword>
<keyword id="KW-0808">Transferase</keyword>
<feature type="chain" id="PRO_1000071735" description="3-phosphoshikimate 1-carboxyvinyltransferase">
    <location>
        <begin position="1"/>
        <end position="446"/>
    </location>
</feature>
<feature type="active site" description="Proton acceptor" evidence="1">
    <location>
        <position position="315"/>
    </location>
</feature>
<feature type="binding site" evidence="1">
    <location>
        <position position="21"/>
    </location>
    <ligand>
        <name>3-phosphoshikimate</name>
        <dbReference type="ChEBI" id="CHEBI:145989"/>
    </ligand>
</feature>
<feature type="binding site" evidence="1">
    <location>
        <position position="21"/>
    </location>
    <ligand>
        <name>phosphoenolpyruvate</name>
        <dbReference type="ChEBI" id="CHEBI:58702"/>
    </ligand>
</feature>
<feature type="binding site" evidence="1">
    <location>
        <position position="22"/>
    </location>
    <ligand>
        <name>3-phosphoshikimate</name>
        <dbReference type="ChEBI" id="CHEBI:145989"/>
    </ligand>
</feature>
<feature type="binding site" evidence="1">
    <location>
        <position position="26"/>
    </location>
    <ligand>
        <name>3-phosphoshikimate</name>
        <dbReference type="ChEBI" id="CHEBI:145989"/>
    </ligand>
</feature>
<feature type="binding site" evidence="1">
    <location>
        <position position="94"/>
    </location>
    <ligand>
        <name>phosphoenolpyruvate</name>
        <dbReference type="ChEBI" id="CHEBI:58702"/>
    </ligand>
</feature>
<feature type="binding site" evidence="1">
    <location>
        <position position="122"/>
    </location>
    <ligand>
        <name>phosphoenolpyruvate</name>
        <dbReference type="ChEBI" id="CHEBI:58702"/>
    </ligand>
</feature>
<feature type="binding site" evidence="1">
    <location>
        <position position="167"/>
    </location>
    <ligand>
        <name>3-phosphoshikimate</name>
        <dbReference type="ChEBI" id="CHEBI:145989"/>
    </ligand>
</feature>
<feature type="binding site" evidence="1">
    <location>
        <position position="169"/>
    </location>
    <ligand>
        <name>3-phosphoshikimate</name>
        <dbReference type="ChEBI" id="CHEBI:145989"/>
    </ligand>
</feature>
<feature type="binding site" evidence="1">
    <location>
        <position position="169"/>
    </location>
    <ligand>
        <name>phosphoenolpyruvate</name>
        <dbReference type="ChEBI" id="CHEBI:58702"/>
    </ligand>
</feature>
<feature type="binding site" evidence="1">
    <location>
        <position position="315"/>
    </location>
    <ligand>
        <name>3-phosphoshikimate</name>
        <dbReference type="ChEBI" id="CHEBI:145989"/>
    </ligand>
</feature>
<feature type="binding site" evidence="1">
    <location>
        <position position="342"/>
    </location>
    <ligand>
        <name>3-phosphoshikimate</name>
        <dbReference type="ChEBI" id="CHEBI:145989"/>
    </ligand>
</feature>
<feature type="binding site" evidence="1">
    <location>
        <position position="346"/>
    </location>
    <ligand>
        <name>phosphoenolpyruvate</name>
        <dbReference type="ChEBI" id="CHEBI:58702"/>
    </ligand>
</feature>
<feature type="binding site" evidence="1">
    <location>
        <position position="388"/>
    </location>
    <ligand>
        <name>phosphoenolpyruvate</name>
        <dbReference type="ChEBI" id="CHEBI:58702"/>
    </ligand>
</feature>
<reference key="1">
    <citation type="submission" date="2006-08" db="EMBL/GenBank/DDBJ databases">
        <title>Complete sequence of Alkalilimnicola ehrilichei MLHE-1.</title>
        <authorList>
            <person name="Copeland A."/>
            <person name="Lucas S."/>
            <person name="Lapidus A."/>
            <person name="Barry K."/>
            <person name="Detter J.C."/>
            <person name="Glavina del Rio T."/>
            <person name="Hammon N."/>
            <person name="Israni S."/>
            <person name="Dalin E."/>
            <person name="Tice H."/>
            <person name="Pitluck S."/>
            <person name="Sims D."/>
            <person name="Brettin T."/>
            <person name="Bruce D."/>
            <person name="Han C."/>
            <person name="Tapia R."/>
            <person name="Gilna P."/>
            <person name="Schmutz J."/>
            <person name="Larimer F."/>
            <person name="Land M."/>
            <person name="Hauser L."/>
            <person name="Kyrpides N."/>
            <person name="Mikhailova N."/>
            <person name="Oremland R.S."/>
            <person name="Hoeft S.E."/>
            <person name="Switzer-Blum J."/>
            <person name="Kulp T."/>
            <person name="King G."/>
            <person name="Tabita R."/>
            <person name="Witte B."/>
            <person name="Santini J.M."/>
            <person name="Basu P."/>
            <person name="Hollibaugh J.T."/>
            <person name="Xie G."/>
            <person name="Stolz J.F."/>
            <person name="Richardson P."/>
        </authorList>
    </citation>
    <scope>NUCLEOTIDE SEQUENCE [LARGE SCALE GENOMIC DNA]</scope>
    <source>
        <strain>ATCC BAA-1101 / DSM 17681 / MLHE-1</strain>
    </source>
</reference>
<protein>
    <recommendedName>
        <fullName evidence="1">3-phosphoshikimate 1-carboxyvinyltransferase</fullName>
        <ecNumber evidence="1">2.5.1.19</ecNumber>
    </recommendedName>
    <alternativeName>
        <fullName evidence="1">5-enolpyruvylshikimate-3-phosphate synthase</fullName>
        <shortName evidence="1">EPSP synthase</shortName>
        <shortName evidence="1">EPSPS</shortName>
    </alternativeName>
</protein>